<dbReference type="EC" id="2.1.1.170" evidence="1"/>
<dbReference type="EMBL" id="AE013598">
    <property type="protein sequence ID" value="AAW77810.1"/>
    <property type="status" value="ALT_INIT"/>
    <property type="molecule type" value="Genomic_DNA"/>
</dbReference>
<dbReference type="SMR" id="Q5GU13"/>
<dbReference type="STRING" id="291331.XOO4556"/>
<dbReference type="KEGG" id="xoo:XOO4556"/>
<dbReference type="PATRIC" id="fig|291331.8.peg.5060"/>
<dbReference type="HOGENOM" id="CLU_065341_2_0_6"/>
<dbReference type="Proteomes" id="UP000006735">
    <property type="component" value="Chromosome"/>
</dbReference>
<dbReference type="GO" id="GO:0005829">
    <property type="term" value="C:cytosol"/>
    <property type="evidence" value="ECO:0007669"/>
    <property type="project" value="TreeGrafter"/>
</dbReference>
<dbReference type="GO" id="GO:0070043">
    <property type="term" value="F:rRNA (guanine-N7-)-methyltransferase activity"/>
    <property type="evidence" value="ECO:0007669"/>
    <property type="project" value="UniProtKB-UniRule"/>
</dbReference>
<dbReference type="CDD" id="cd02440">
    <property type="entry name" value="AdoMet_MTases"/>
    <property type="match status" value="1"/>
</dbReference>
<dbReference type="Gene3D" id="3.40.50.150">
    <property type="entry name" value="Vaccinia Virus protein VP39"/>
    <property type="match status" value="1"/>
</dbReference>
<dbReference type="HAMAP" id="MF_00074">
    <property type="entry name" value="16SrRNA_methyltr_G"/>
    <property type="match status" value="1"/>
</dbReference>
<dbReference type="InterPro" id="IPR003682">
    <property type="entry name" value="rRNA_ssu_MeTfrase_G"/>
</dbReference>
<dbReference type="InterPro" id="IPR029063">
    <property type="entry name" value="SAM-dependent_MTases_sf"/>
</dbReference>
<dbReference type="NCBIfam" id="TIGR00138">
    <property type="entry name" value="rsmG_gidB"/>
    <property type="match status" value="1"/>
</dbReference>
<dbReference type="PANTHER" id="PTHR31760">
    <property type="entry name" value="S-ADENOSYL-L-METHIONINE-DEPENDENT METHYLTRANSFERASES SUPERFAMILY PROTEIN"/>
    <property type="match status" value="1"/>
</dbReference>
<dbReference type="PANTHER" id="PTHR31760:SF0">
    <property type="entry name" value="S-ADENOSYL-L-METHIONINE-DEPENDENT METHYLTRANSFERASES SUPERFAMILY PROTEIN"/>
    <property type="match status" value="1"/>
</dbReference>
<dbReference type="Pfam" id="PF02527">
    <property type="entry name" value="GidB"/>
    <property type="match status" value="1"/>
</dbReference>
<dbReference type="PIRSF" id="PIRSF003078">
    <property type="entry name" value="GidB"/>
    <property type="match status" value="1"/>
</dbReference>
<dbReference type="SUPFAM" id="SSF53335">
    <property type="entry name" value="S-adenosyl-L-methionine-dependent methyltransferases"/>
    <property type="match status" value="1"/>
</dbReference>
<feature type="chain" id="PRO_0000335451" description="Ribosomal RNA small subunit methyltransferase G">
    <location>
        <begin position="1"/>
        <end position="212"/>
    </location>
</feature>
<feature type="binding site" evidence="1">
    <location>
        <position position="80"/>
    </location>
    <ligand>
        <name>S-adenosyl-L-methionine</name>
        <dbReference type="ChEBI" id="CHEBI:59789"/>
    </ligand>
</feature>
<feature type="binding site" evidence="1">
    <location>
        <position position="85"/>
    </location>
    <ligand>
        <name>S-adenosyl-L-methionine</name>
        <dbReference type="ChEBI" id="CHEBI:59789"/>
    </ligand>
</feature>
<feature type="binding site" evidence="1">
    <location>
        <begin position="131"/>
        <end position="132"/>
    </location>
    <ligand>
        <name>S-adenosyl-L-methionine</name>
        <dbReference type="ChEBI" id="CHEBI:59789"/>
    </ligand>
</feature>
<feature type="binding site" evidence="1">
    <location>
        <position position="146"/>
    </location>
    <ligand>
        <name>S-adenosyl-L-methionine</name>
        <dbReference type="ChEBI" id="CHEBI:59789"/>
    </ligand>
</feature>
<accession>Q5GU13</accession>
<reference key="1">
    <citation type="journal article" date="2005" name="Nucleic Acids Res.">
        <title>The genome sequence of Xanthomonas oryzae pathovar oryzae KACC10331, the bacterial blight pathogen of rice.</title>
        <authorList>
            <person name="Lee B.-M."/>
            <person name="Park Y.-J."/>
            <person name="Park D.-S."/>
            <person name="Kang H.-W."/>
            <person name="Kim J.-G."/>
            <person name="Song E.-S."/>
            <person name="Park I.-C."/>
            <person name="Yoon U.-H."/>
            <person name="Hahn J.-H."/>
            <person name="Koo B.-S."/>
            <person name="Lee G.-B."/>
            <person name="Kim H."/>
            <person name="Park H.-S."/>
            <person name="Yoon K.-O."/>
            <person name="Kim J.-H."/>
            <person name="Jung C.-H."/>
            <person name="Koh N.-H."/>
            <person name="Seo J.-S."/>
            <person name="Go S.-J."/>
        </authorList>
    </citation>
    <scope>NUCLEOTIDE SEQUENCE [LARGE SCALE GENOMIC DNA]</scope>
    <source>
        <strain>KACC10331 / KXO85</strain>
    </source>
</reference>
<sequence length="212" mass="22959">MNDAALAPDVSAALERGLQAQSLDTAFAAPLLRYLALLVRWNKTYNLTAVRDPRAMVTRHLLDSLAMQPYIASGMLADLGTGPGLPGIPLAITRPQLQVTLVESNGKKARFMREALRHLELRNARVAESRAEALDEPTAYDHLTARALDTLAGIIAVGGHLLRPGGSLLAMKGIYPHEEIAALPEGWTMSEVHQLQVPGLDGERHLVVVRKA</sequence>
<name>RSMG_XANOR</name>
<organism>
    <name type="scientific">Xanthomonas oryzae pv. oryzae (strain KACC10331 / KXO85)</name>
    <dbReference type="NCBI Taxonomy" id="291331"/>
    <lineage>
        <taxon>Bacteria</taxon>
        <taxon>Pseudomonadati</taxon>
        <taxon>Pseudomonadota</taxon>
        <taxon>Gammaproteobacteria</taxon>
        <taxon>Lysobacterales</taxon>
        <taxon>Lysobacteraceae</taxon>
        <taxon>Xanthomonas</taxon>
    </lineage>
</organism>
<proteinExistence type="inferred from homology"/>
<protein>
    <recommendedName>
        <fullName evidence="1">Ribosomal RNA small subunit methyltransferase G</fullName>
        <ecNumber evidence="1">2.1.1.170</ecNumber>
    </recommendedName>
    <alternativeName>
        <fullName evidence="1">16S rRNA 7-methylguanosine methyltransferase</fullName>
        <shortName evidence="1">16S rRNA m7G methyltransferase</shortName>
    </alternativeName>
</protein>
<gene>
    <name evidence="1" type="primary">rsmG</name>
    <name type="ordered locus">XOO4556</name>
</gene>
<evidence type="ECO:0000255" key="1">
    <source>
        <dbReference type="HAMAP-Rule" id="MF_00074"/>
    </source>
</evidence>
<evidence type="ECO:0000305" key="2"/>
<keyword id="KW-0963">Cytoplasm</keyword>
<keyword id="KW-0489">Methyltransferase</keyword>
<keyword id="KW-1185">Reference proteome</keyword>
<keyword id="KW-0698">rRNA processing</keyword>
<keyword id="KW-0949">S-adenosyl-L-methionine</keyword>
<keyword id="KW-0808">Transferase</keyword>
<comment type="function">
    <text evidence="1">Specifically methylates the N7 position of guanine in position 527 of 16S rRNA.</text>
</comment>
<comment type="catalytic activity">
    <reaction evidence="1">
        <text>guanosine(527) in 16S rRNA + S-adenosyl-L-methionine = N(7)-methylguanosine(527) in 16S rRNA + S-adenosyl-L-homocysteine</text>
        <dbReference type="Rhea" id="RHEA:42732"/>
        <dbReference type="Rhea" id="RHEA-COMP:10209"/>
        <dbReference type="Rhea" id="RHEA-COMP:10210"/>
        <dbReference type="ChEBI" id="CHEBI:57856"/>
        <dbReference type="ChEBI" id="CHEBI:59789"/>
        <dbReference type="ChEBI" id="CHEBI:74269"/>
        <dbReference type="ChEBI" id="CHEBI:74480"/>
        <dbReference type="EC" id="2.1.1.170"/>
    </reaction>
</comment>
<comment type="subcellular location">
    <subcellularLocation>
        <location evidence="1">Cytoplasm</location>
    </subcellularLocation>
</comment>
<comment type="similarity">
    <text evidence="1">Belongs to the methyltransferase superfamily. RNA methyltransferase RsmG family.</text>
</comment>
<comment type="sequence caution" evidence="2">
    <conflict type="erroneous initiation">
        <sequence resource="EMBL-CDS" id="AAW77810"/>
    </conflict>
</comment>